<accession>C1AHR4</accession>
<name>RL17_MYCBT</name>
<evidence type="ECO:0000255" key="1">
    <source>
        <dbReference type="HAMAP-Rule" id="MF_01368"/>
    </source>
</evidence>
<evidence type="ECO:0000256" key="2">
    <source>
        <dbReference type="SAM" id="MobiDB-lite"/>
    </source>
</evidence>
<evidence type="ECO:0000305" key="3"/>
<gene>
    <name evidence="1" type="primary">rplQ</name>
    <name type="ordered locus">JTY_3521</name>
</gene>
<reference key="1">
    <citation type="journal article" date="2009" name="Vaccine">
        <title>Whole genome sequence analysis of Mycobacterium bovis bacillus Calmette-Guerin (BCG) Tokyo 172: a comparative study of BCG vaccine substrains.</title>
        <authorList>
            <person name="Seki M."/>
            <person name="Honda I."/>
            <person name="Fujita I."/>
            <person name="Yano I."/>
            <person name="Yamamoto S."/>
            <person name="Koyama A."/>
        </authorList>
    </citation>
    <scope>NUCLEOTIDE SEQUENCE [LARGE SCALE GENOMIC DNA]</scope>
    <source>
        <strain>BCG / Tokyo 172 / ATCC 35737 / TMC 1019</strain>
    </source>
</reference>
<dbReference type="EMBL" id="AP010918">
    <property type="protein sequence ID" value="BAH27793.1"/>
    <property type="molecule type" value="Genomic_DNA"/>
</dbReference>
<dbReference type="RefSeq" id="WP_003418346.1">
    <property type="nucleotide sequence ID" value="NZ_CP014566.1"/>
</dbReference>
<dbReference type="SMR" id="C1AHR4"/>
<dbReference type="GeneID" id="45427445"/>
<dbReference type="KEGG" id="mbt:JTY_3521"/>
<dbReference type="HOGENOM" id="CLU_074407_0_0_11"/>
<dbReference type="GO" id="GO:0022625">
    <property type="term" value="C:cytosolic large ribosomal subunit"/>
    <property type="evidence" value="ECO:0007669"/>
    <property type="project" value="TreeGrafter"/>
</dbReference>
<dbReference type="GO" id="GO:0003735">
    <property type="term" value="F:structural constituent of ribosome"/>
    <property type="evidence" value="ECO:0007669"/>
    <property type="project" value="InterPro"/>
</dbReference>
<dbReference type="GO" id="GO:0006412">
    <property type="term" value="P:translation"/>
    <property type="evidence" value="ECO:0007669"/>
    <property type="project" value="UniProtKB-UniRule"/>
</dbReference>
<dbReference type="FunFam" id="3.90.1030.10:FF:000001">
    <property type="entry name" value="50S ribosomal protein L17"/>
    <property type="match status" value="1"/>
</dbReference>
<dbReference type="Gene3D" id="3.90.1030.10">
    <property type="entry name" value="Ribosomal protein L17"/>
    <property type="match status" value="1"/>
</dbReference>
<dbReference type="HAMAP" id="MF_01368">
    <property type="entry name" value="Ribosomal_bL17"/>
    <property type="match status" value="1"/>
</dbReference>
<dbReference type="InterPro" id="IPR000456">
    <property type="entry name" value="Ribosomal_bL17"/>
</dbReference>
<dbReference type="InterPro" id="IPR047859">
    <property type="entry name" value="Ribosomal_bL17_CS"/>
</dbReference>
<dbReference type="InterPro" id="IPR036373">
    <property type="entry name" value="Ribosomal_bL17_sf"/>
</dbReference>
<dbReference type="NCBIfam" id="TIGR00059">
    <property type="entry name" value="L17"/>
    <property type="match status" value="1"/>
</dbReference>
<dbReference type="PANTHER" id="PTHR14413:SF16">
    <property type="entry name" value="LARGE RIBOSOMAL SUBUNIT PROTEIN BL17M"/>
    <property type="match status" value="1"/>
</dbReference>
<dbReference type="PANTHER" id="PTHR14413">
    <property type="entry name" value="RIBOSOMAL PROTEIN L17"/>
    <property type="match status" value="1"/>
</dbReference>
<dbReference type="Pfam" id="PF01196">
    <property type="entry name" value="Ribosomal_L17"/>
    <property type="match status" value="1"/>
</dbReference>
<dbReference type="SUPFAM" id="SSF64263">
    <property type="entry name" value="Prokaryotic ribosomal protein L17"/>
    <property type="match status" value="1"/>
</dbReference>
<dbReference type="PROSITE" id="PS01167">
    <property type="entry name" value="RIBOSOMAL_L17"/>
    <property type="match status" value="1"/>
</dbReference>
<feature type="chain" id="PRO_1000184033" description="Large ribosomal subunit protein bL17">
    <location>
        <begin position="1"/>
        <end position="180"/>
    </location>
</feature>
<feature type="region of interest" description="Disordered" evidence="2">
    <location>
        <begin position="134"/>
        <end position="180"/>
    </location>
</feature>
<keyword id="KW-0687">Ribonucleoprotein</keyword>
<keyword id="KW-0689">Ribosomal protein</keyword>
<organism>
    <name type="scientific">Mycobacterium bovis (strain BCG / Tokyo 172 / ATCC 35737 / TMC 1019)</name>
    <dbReference type="NCBI Taxonomy" id="561275"/>
    <lineage>
        <taxon>Bacteria</taxon>
        <taxon>Bacillati</taxon>
        <taxon>Actinomycetota</taxon>
        <taxon>Actinomycetes</taxon>
        <taxon>Mycobacteriales</taxon>
        <taxon>Mycobacteriaceae</taxon>
        <taxon>Mycobacterium</taxon>
        <taxon>Mycobacterium tuberculosis complex</taxon>
    </lineage>
</organism>
<comment type="subunit">
    <text evidence="1">Part of the 50S ribosomal subunit. Contacts protein L32.</text>
</comment>
<comment type="similarity">
    <text evidence="1">Belongs to the bacterial ribosomal protein bL17 family.</text>
</comment>
<proteinExistence type="inferred from homology"/>
<sequence>MPKPTKGPRLGGSSSHQKAILANLATSLFEHGRITTTEPKARALRPYAEKLITHAKKGALHNRREVLKKLRDKDVVHTLFAEIGPFFADRDGGYTRIIKIEARKGDNAPMAVIELVREKTVTSEANRARRVAAAQAKAKKAAAMPTEESEAKPAEEGDVVGASEPDAKAPEEPPAEAPEN</sequence>
<protein>
    <recommendedName>
        <fullName evidence="1">Large ribosomal subunit protein bL17</fullName>
    </recommendedName>
    <alternativeName>
        <fullName evidence="3">50S ribosomal protein L17</fullName>
    </alternativeName>
</protein>